<organism>
    <name type="scientific">Homo sapiens</name>
    <name type="common">Human</name>
    <dbReference type="NCBI Taxonomy" id="9606"/>
    <lineage>
        <taxon>Eukaryota</taxon>
        <taxon>Metazoa</taxon>
        <taxon>Chordata</taxon>
        <taxon>Craniata</taxon>
        <taxon>Vertebrata</taxon>
        <taxon>Euteleostomi</taxon>
        <taxon>Mammalia</taxon>
        <taxon>Eutheria</taxon>
        <taxon>Euarchontoglires</taxon>
        <taxon>Primates</taxon>
        <taxon>Haplorrhini</taxon>
        <taxon>Catarrhini</taxon>
        <taxon>Hominidae</taxon>
        <taxon>Homo</taxon>
    </lineage>
</organism>
<sequence length="246" mass="27687">MFQLPILNFSPQQVAGVCETLEESGDVERLGRFLWSLPVAPAACEALNKNESVLRARAIVAFHGGNYRELYHILENHKFTKESHAKLQALWLEAHYQEAEKLRGRPLGPVDKYRVRKKFPLPRTIWDGEQKTHCFKERTRHLLREWYLQDPYPNPSKKRELAQATGLTPTQVGNWFKNRRQRDRAAAAKNRLQQQVLSQGSGRALRAEGDGTPEVLGVATSPAASLSSKAATSAISITSSDSECDI</sequence>
<comment type="function">
    <text>May be involved in eye development.</text>
</comment>
<comment type="subunit">
    <text evidence="1">Interacts with TLE4 and TLE5.</text>
</comment>
<comment type="subcellular location">
    <subcellularLocation>
        <location evidence="2">Nucleus</location>
    </subcellularLocation>
</comment>
<comment type="tissue specificity">
    <text>Expressed in the developing and adult retina. Also expressed in the hypothalamic and the pituitary regions.</text>
</comment>
<comment type="disease" evidence="8">
    <disease id="DI-00757">
        <name>Optic disk anomalies with retinal and/or macular dystrophy</name>
        <acronym>ODRMD</acronym>
        <description>An ocular disorder characterized by optic nerve dysplasia, optic disk anomalies, chorioretinal dystrophy and macular atrophy. Some patients have microphthalmia.</description>
        <dbReference type="MIM" id="212550"/>
    </disease>
    <text>The disease is caused by variants affecting the gene represented in this entry.</text>
</comment>
<comment type="similarity">
    <text evidence="10">Belongs to the SIX/Sine oculis homeobox family.</text>
</comment>
<dbReference type="EMBL" id="AF031648">
    <property type="protein sequence ID" value="AAF04402.1"/>
    <property type="molecule type" value="Genomic_DNA"/>
</dbReference>
<dbReference type="EMBL" id="AJ011785">
    <property type="protein sequence ID" value="CAA09773.1"/>
    <property type="molecule type" value="mRNA"/>
</dbReference>
<dbReference type="EMBL" id="AF141651">
    <property type="protein sequence ID" value="AAD49844.1"/>
    <property type="molecule type" value="Genomic_DNA"/>
</dbReference>
<dbReference type="EMBL" id="BC069413">
    <property type="protein sequence ID" value="AAH69413.2"/>
    <property type="molecule type" value="mRNA"/>
</dbReference>
<dbReference type="EMBL" id="AB041399">
    <property type="protein sequence ID" value="BAA94484.1"/>
    <property type="molecule type" value="Genomic_DNA"/>
</dbReference>
<dbReference type="CCDS" id="CCDS9747.1"/>
<dbReference type="RefSeq" id="NP_031400.2">
    <property type="nucleotide sequence ID" value="NM_007374.3"/>
</dbReference>
<dbReference type="BMRB" id="O95475"/>
<dbReference type="SMR" id="O95475"/>
<dbReference type="BioGRID" id="111034">
    <property type="interactions" value="8"/>
</dbReference>
<dbReference type="FunCoup" id="O95475">
    <property type="interactions" value="375"/>
</dbReference>
<dbReference type="IntAct" id="O95475">
    <property type="interactions" value="8"/>
</dbReference>
<dbReference type="STRING" id="9606.ENSP00000328596"/>
<dbReference type="iPTMnet" id="O95475"/>
<dbReference type="PhosphoSitePlus" id="O95475"/>
<dbReference type="BioMuta" id="SIX6"/>
<dbReference type="CPTAC" id="CPTAC-1185"/>
<dbReference type="MassIVE" id="O95475"/>
<dbReference type="PaxDb" id="9606-ENSP00000328596"/>
<dbReference type="PeptideAtlas" id="O95475"/>
<dbReference type="ProteomicsDB" id="50906"/>
<dbReference type="Antibodypedia" id="40">
    <property type="antibodies" value="161 antibodies from 29 providers"/>
</dbReference>
<dbReference type="DNASU" id="4990"/>
<dbReference type="Ensembl" id="ENST00000327720.6">
    <property type="protein sequence ID" value="ENSP00000328596.5"/>
    <property type="gene ID" value="ENSG00000184302.7"/>
</dbReference>
<dbReference type="GeneID" id="4990"/>
<dbReference type="KEGG" id="hsa:4990"/>
<dbReference type="MANE-Select" id="ENST00000327720.6">
    <property type="protein sequence ID" value="ENSP00000328596.5"/>
    <property type="RefSeq nucleotide sequence ID" value="NM_007374.3"/>
    <property type="RefSeq protein sequence ID" value="NP_031400.2"/>
</dbReference>
<dbReference type="UCSC" id="uc001xfa.5">
    <property type="organism name" value="human"/>
</dbReference>
<dbReference type="AGR" id="HGNC:10892"/>
<dbReference type="CTD" id="4990"/>
<dbReference type="DisGeNET" id="4990"/>
<dbReference type="GeneCards" id="SIX6"/>
<dbReference type="HGNC" id="HGNC:10892">
    <property type="gene designation" value="SIX6"/>
</dbReference>
<dbReference type="HPA" id="ENSG00000184302">
    <property type="expression patterns" value="Tissue enriched (pituitary)"/>
</dbReference>
<dbReference type="MalaCards" id="SIX6"/>
<dbReference type="MIM" id="212550">
    <property type="type" value="phenotype"/>
</dbReference>
<dbReference type="MIM" id="606326">
    <property type="type" value="gene"/>
</dbReference>
<dbReference type="neXtProt" id="NX_O95475"/>
<dbReference type="OpenTargets" id="ENSG00000184302"/>
<dbReference type="Orphanet" id="98938">
    <property type="disease" value="Colobomatous microphthalmia"/>
</dbReference>
<dbReference type="Orphanet" id="435930">
    <property type="disease" value="Colobomatous optic disc-macular atrophy-chorioretinopathy syndrome"/>
</dbReference>
<dbReference type="Orphanet" id="35612">
    <property type="disease" value="Nanophthalmos"/>
</dbReference>
<dbReference type="PharmGKB" id="PA35792"/>
<dbReference type="VEuPathDB" id="HostDB:ENSG00000184302"/>
<dbReference type="eggNOG" id="KOG0775">
    <property type="taxonomic scope" value="Eukaryota"/>
</dbReference>
<dbReference type="GeneTree" id="ENSGT00940000160091"/>
<dbReference type="HOGENOM" id="CLU_046914_0_1_1"/>
<dbReference type="InParanoid" id="O95475"/>
<dbReference type="OMA" id="PAGICCV"/>
<dbReference type="OrthoDB" id="3501850at2759"/>
<dbReference type="PAN-GO" id="O95475">
    <property type="GO annotations" value="6 GO annotations based on evolutionary models"/>
</dbReference>
<dbReference type="PhylomeDB" id="O95475"/>
<dbReference type="TreeFam" id="TF315545"/>
<dbReference type="PathwayCommons" id="O95475"/>
<dbReference type="SignaLink" id="O95475"/>
<dbReference type="SIGNOR" id="O95475"/>
<dbReference type="BioGRID-ORCS" id="4990">
    <property type="hits" value="11 hits in 1166 CRISPR screens"/>
</dbReference>
<dbReference type="GenomeRNAi" id="4990"/>
<dbReference type="Pharos" id="O95475">
    <property type="development level" value="Tbio"/>
</dbReference>
<dbReference type="PRO" id="PR:O95475"/>
<dbReference type="Proteomes" id="UP000005640">
    <property type="component" value="Chromosome 14"/>
</dbReference>
<dbReference type="RNAct" id="O95475">
    <property type="molecule type" value="protein"/>
</dbReference>
<dbReference type="Bgee" id="ENSG00000184302">
    <property type="expression patterns" value="Expressed in adenohypophysis and 23 other cell types or tissues"/>
</dbReference>
<dbReference type="GO" id="GO:0000785">
    <property type="term" value="C:chromatin"/>
    <property type="evidence" value="ECO:0000247"/>
    <property type="project" value="NTNU_SB"/>
</dbReference>
<dbReference type="GO" id="GO:0005634">
    <property type="term" value="C:nucleus"/>
    <property type="evidence" value="ECO:0000318"/>
    <property type="project" value="GO_Central"/>
</dbReference>
<dbReference type="GO" id="GO:0005667">
    <property type="term" value="C:transcription regulator complex"/>
    <property type="evidence" value="ECO:0000318"/>
    <property type="project" value="GO_Central"/>
</dbReference>
<dbReference type="GO" id="GO:0000981">
    <property type="term" value="F:DNA-binding transcription factor activity, RNA polymerase II-specific"/>
    <property type="evidence" value="ECO:0000247"/>
    <property type="project" value="NTNU_SB"/>
</dbReference>
<dbReference type="GO" id="GO:0000978">
    <property type="term" value="F:RNA polymerase II cis-regulatory region sequence-specific DNA binding"/>
    <property type="evidence" value="ECO:0000314"/>
    <property type="project" value="MGI"/>
</dbReference>
<dbReference type="GO" id="GO:1990837">
    <property type="term" value="F:sequence-specific double-stranded DNA binding"/>
    <property type="evidence" value="ECO:0000314"/>
    <property type="project" value="ARUK-UCL"/>
</dbReference>
<dbReference type="GO" id="GO:0009887">
    <property type="term" value="P:animal organ morphogenesis"/>
    <property type="evidence" value="ECO:0000304"/>
    <property type="project" value="ProtInc"/>
</dbReference>
<dbReference type="GO" id="GO:0001654">
    <property type="term" value="P:eye development"/>
    <property type="evidence" value="ECO:0000318"/>
    <property type="project" value="GO_Central"/>
</dbReference>
<dbReference type="GO" id="GO:0006357">
    <property type="term" value="P:regulation of transcription by RNA polymerase II"/>
    <property type="evidence" value="ECO:0000318"/>
    <property type="project" value="GO_Central"/>
</dbReference>
<dbReference type="GO" id="GO:0007601">
    <property type="term" value="P:visual perception"/>
    <property type="evidence" value="ECO:0000304"/>
    <property type="project" value="ProtInc"/>
</dbReference>
<dbReference type="CDD" id="cd00086">
    <property type="entry name" value="homeodomain"/>
    <property type="match status" value="1"/>
</dbReference>
<dbReference type="FunFam" id="1.10.10.60:FF:000046">
    <property type="entry name" value="SIX homeobox 3"/>
    <property type="match status" value="1"/>
</dbReference>
<dbReference type="Gene3D" id="1.10.10.60">
    <property type="entry name" value="Homeodomain-like"/>
    <property type="match status" value="1"/>
</dbReference>
<dbReference type="InterPro" id="IPR001356">
    <property type="entry name" value="HD"/>
</dbReference>
<dbReference type="InterPro" id="IPR009057">
    <property type="entry name" value="Homeodomain-like_sf"/>
</dbReference>
<dbReference type="InterPro" id="IPR031701">
    <property type="entry name" value="SIX1_SD"/>
</dbReference>
<dbReference type="PANTHER" id="PTHR10390">
    <property type="entry name" value="HOMEOBOX PROTEIN SIX"/>
    <property type="match status" value="1"/>
</dbReference>
<dbReference type="PANTHER" id="PTHR10390:SF12">
    <property type="entry name" value="HOMEOBOX PROTEIN SIX6"/>
    <property type="match status" value="1"/>
</dbReference>
<dbReference type="Pfam" id="PF00046">
    <property type="entry name" value="Homeodomain"/>
    <property type="match status" value="1"/>
</dbReference>
<dbReference type="Pfam" id="PF16878">
    <property type="entry name" value="SIX1_SD"/>
    <property type="match status" value="1"/>
</dbReference>
<dbReference type="SMART" id="SM00389">
    <property type="entry name" value="HOX"/>
    <property type="match status" value="1"/>
</dbReference>
<dbReference type="SUPFAM" id="SSF46689">
    <property type="entry name" value="Homeodomain-like"/>
    <property type="match status" value="1"/>
</dbReference>
<dbReference type="PROSITE" id="PS50071">
    <property type="entry name" value="HOMEOBOX_2"/>
    <property type="match status" value="1"/>
</dbReference>
<protein>
    <recommendedName>
        <fullName>Homeobox protein SIX6</fullName>
    </recommendedName>
    <alternativeName>
        <fullName>Homeodomain protein OPTX2</fullName>
    </alternativeName>
    <alternativeName>
        <fullName>Optic homeobox 2</fullName>
    </alternativeName>
    <alternativeName>
        <fullName>Sine oculis homeobox homolog 6</fullName>
    </alternativeName>
</protein>
<keyword id="KW-0898">Cataract</keyword>
<keyword id="KW-0217">Developmental protein</keyword>
<keyword id="KW-0225">Disease variant</keyword>
<keyword id="KW-0238">DNA-binding</keyword>
<keyword id="KW-0371">Homeobox</keyword>
<keyword id="KW-1013">Microphthalmia</keyword>
<keyword id="KW-0539">Nucleus</keyword>
<keyword id="KW-0597">Phosphoprotein</keyword>
<keyword id="KW-1267">Proteomics identification</keyword>
<keyword id="KW-1185">Reference proteome</keyword>
<gene>
    <name type="primary">SIX6</name>
    <name type="synonym">OPTX2</name>
    <name type="synonym">SIX9</name>
</gene>
<feature type="chain" id="PRO_0000049307" description="Homeobox protein SIX6">
    <location>
        <begin position="1"/>
        <end position="246"/>
    </location>
</feature>
<feature type="DNA-binding region" description="Homeobox" evidence="2">
    <location>
        <begin position="128"/>
        <end position="187"/>
    </location>
</feature>
<feature type="region of interest" description="Disordered" evidence="3">
    <location>
        <begin position="190"/>
        <end position="246"/>
    </location>
</feature>
<feature type="compositionally biased region" description="Polar residues" evidence="3">
    <location>
        <begin position="191"/>
        <end position="201"/>
    </location>
</feature>
<feature type="compositionally biased region" description="Low complexity" evidence="3">
    <location>
        <begin position="219"/>
        <end position="246"/>
    </location>
</feature>
<feature type="modified residue" description="Phosphothreonine" evidence="11">
    <location>
        <position position="212"/>
    </location>
</feature>
<feature type="modified residue" description="Phosphoserine" evidence="11">
    <location>
        <position position="221"/>
    </location>
</feature>
<feature type="modified residue" description="Phosphoserine" evidence="11">
    <location>
        <position position="225"/>
    </location>
</feature>
<feature type="modified residue" description="Phosphoserine" evidence="11">
    <location>
        <position position="227"/>
    </location>
</feature>
<feature type="modified residue" description="Phosphoserine" evidence="11">
    <location>
        <position position="228"/>
    </location>
</feature>
<feature type="sequence variant" id="VAR_031631" description="In dbSNP:rs33912345." evidence="4 5 6 7 9">
    <original>H</original>
    <variation>N</variation>
    <location>
        <position position="141"/>
    </location>
</feature>
<feature type="sequence variant" id="VAR_026241" description="Found in a patient with bilateral asymmetric microphthalmia, cataract and nystagmus; uncertain significance; dbSNP:rs104894480." evidence="6">
    <original>T</original>
    <variation>A</variation>
    <location>
        <position position="165"/>
    </location>
</feature>
<accession>O95475</accession>
<accession>Q6NT42</accession>
<accession>Q9P1X8</accession>
<name>SIX6_HUMAN</name>
<reference key="1">
    <citation type="submission" date="1997-10" db="EMBL/GenBank/DDBJ databases">
        <title>OPTX2, a novel gene expressed in the eye, belongs to a cluster of sine oculis-related homeobox genes.</title>
        <authorList>
            <person name="Leppert G.S."/>
            <person name="Yang J.-M."/>
            <person name="Toy J."/>
            <person name="Sundin O.H."/>
        </authorList>
    </citation>
    <scope>NUCLEOTIDE SEQUENCE [GENOMIC DNA]</scope>
    <scope>VARIANT ASN-141</scope>
    <source>
        <tissue>Eye</tissue>
    </source>
</reference>
<reference key="2">
    <citation type="journal article" date="1999" name="Mech. Dev.">
        <title>Six9 (Optx2), a new member of the Six gene family of transcription factors, is expressed at early stages of vertebrate ocular and pituitary development.</title>
        <authorList>
            <person name="Lopez-Rios J."/>
            <person name="Gallardo E."/>
            <person name="Rodriguez de Cordoba S."/>
            <person name="Bovolenta P."/>
        </authorList>
    </citation>
    <scope>NUCLEOTIDE SEQUENCE [MRNA]</scope>
    <scope>VARIANT ASN-141</scope>
</reference>
<reference key="3">
    <citation type="journal article" date="1999" name="Genomics">
        <title>Genomic cloning and characterization of the human homeobox gene SIX6 reveals a cluster of SIX genes in chromosome 14 and associates SIX6 hemizygosity with bilateral anophthalmia and pituitary anomalies.</title>
        <authorList>
            <person name="Gallardo M.E."/>
            <person name="Lopez-Rios J."/>
            <person name="Fernaud-Espinosa I."/>
            <person name="Granadino B."/>
            <person name="Sanz R."/>
            <person name="Ramos C."/>
            <person name="Ayuso C."/>
            <person name="Seller M.J."/>
            <person name="Brunner H.G."/>
            <person name="Bovolenta P."/>
            <person name="Rodriguez de Cordoba S."/>
        </authorList>
    </citation>
    <scope>NUCLEOTIDE SEQUENCE [GENOMIC DNA]</scope>
    <scope>VARIANT ASN-141</scope>
</reference>
<reference key="4">
    <citation type="journal article" date="2004" name="Genome Res.">
        <title>The status, quality, and expansion of the NIH full-length cDNA project: the Mammalian Gene Collection (MGC).</title>
        <authorList>
            <consortium name="The MGC Project Team"/>
        </authorList>
    </citation>
    <scope>NUCLEOTIDE SEQUENCE [LARGE SCALE MRNA]</scope>
    <scope>VARIANT ASN-141</scope>
</reference>
<reference key="5">
    <citation type="journal article" date="2004" name="Mol. Biol. Evol.">
        <title>Human-specific amino acid changes found in 103 protein-coding genes.</title>
        <authorList>
            <person name="Kitano T."/>
            <person name="Liu Y.-H."/>
            <person name="Ueda S."/>
            <person name="Saitou N."/>
        </authorList>
    </citation>
    <scope>NUCLEOTIDE SEQUENCE [GENOMIC DNA] OF 1-165</scope>
</reference>
<reference key="6">
    <citation type="journal article" date="2009" name="Sci. Signal.">
        <title>Quantitative phosphoproteomic analysis of T cell receptor signaling reveals system-wide modulation of protein-protein interactions.</title>
        <authorList>
            <person name="Mayya V."/>
            <person name="Lundgren D.H."/>
            <person name="Hwang S.-I."/>
            <person name="Rezaul K."/>
            <person name="Wu L."/>
            <person name="Eng J.K."/>
            <person name="Rodionov V."/>
            <person name="Han D.K."/>
        </authorList>
    </citation>
    <scope>PHOSPHORYLATION [LARGE SCALE ANALYSIS] AT THR-212; SER-221; SER-225; SER-227 AND SER-228</scope>
    <scope>IDENTIFICATION BY MASS SPECTROMETRY [LARGE SCALE ANALYSIS]</scope>
    <source>
        <tissue>Leukemic T-cell</tissue>
    </source>
</reference>
<reference key="7">
    <citation type="journal article" date="2013" name="Clin. Genet.">
        <title>Homozygous truncation of SIX6 causes complex microphthalmia in humans.</title>
        <authorList>
            <person name="Aldahmesh M.A."/>
            <person name="Khan A.O."/>
            <person name="Hijazi H."/>
            <person name="Alkuraya F.S."/>
        </authorList>
    </citation>
    <scope>INVOLVEMENT IN ODRMD</scope>
</reference>
<reference key="8">
    <citation type="journal article" date="2004" name="Am. J. Med. Genet. A">
        <title>Analysis of the developmental SIX6 homeobox gene in patients with anophthalmia/microphthalmia.</title>
        <authorList>
            <person name="Gallardo M.E."/>
            <person name="Rodriguez De Cordoba S."/>
            <person name="Schneider A.S."/>
            <person name="Dwyer M.A."/>
            <person name="Ayuso C."/>
            <person name="Bovolenta P."/>
        </authorList>
    </citation>
    <scope>VARIANTS ASN-141 AND ALA-165</scope>
</reference>
<evidence type="ECO:0000250" key="1"/>
<evidence type="ECO:0000255" key="2">
    <source>
        <dbReference type="PROSITE-ProRule" id="PRU00108"/>
    </source>
</evidence>
<evidence type="ECO:0000256" key="3">
    <source>
        <dbReference type="SAM" id="MobiDB-lite"/>
    </source>
</evidence>
<evidence type="ECO:0000269" key="4">
    <source>
    </source>
</evidence>
<evidence type="ECO:0000269" key="5">
    <source>
    </source>
</evidence>
<evidence type="ECO:0000269" key="6">
    <source>
    </source>
</evidence>
<evidence type="ECO:0000269" key="7">
    <source>
    </source>
</evidence>
<evidence type="ECO:0000269" key="8">
    <source>
    </source>
</evidence>
<evidence type="ECO:0000269" key="9">
    <source ref="1"/>
</evidence>
<evidence type="ECO:0000305" key="10"/>
<evidence type="ECO:0007744" key="11">
    <source>
    </source>
</evidence>
<proteinExistence type="evidence at protein level"/>